<comment type="function">
    <text evidence="1">Catalyzes the pyruvoyl-dependent decarboxylation of aspartate to produce beta-alanine.</text>
</comment>
<comment type="catalytic activity">
    <reaction evidence="1">
        <text>L-aspartate + H(+) = beta-alanine + CO2</text>
        <dbReference type="Rhea" id="RHEA:19497"/>
        <dbReference type="ChEBI" id="CHEBI:15378"/>
        <dbReference type="ChEBI" id="CHEBI:16526"/>
        <dbReference type="ChEBI" id="CHEBI:29991"/>
        <dbReference type="ChEBI" id="CHEBI:57966"/>
        <dbReference type="EC" id="4.1.1.11"/>
    </reaction>
</comment>
<comment type="cofactor">
    <cofactor evidence="1">
        <name>pyruvate</name>
        <dbReference type="ChEBI" id="CHEBI:15361"/>
    </cofactor>
    <text evidence="1">Binds 1 pyruvoyl group covalently per subunit.</text>
</comment>
<comment type="pathway">
    <text evidence="1">Cofactor biosynthesis; (R)-pantothenate biosynthesis; beta-alanine from L-aspartate: step 1/1.</text>
</comment>
<comment type="subunit">
    <text evidence="1">Heterooctamer of four alpha and four beta subunits.</text>
</comment>
<comment type="subcellular location">
    <subcellularLocation>
        <location evidence="1">Cytoplasm</location>
    </subcellularLocation>
</comment>
<comment type="PTM">
    <text evidence="1">Is synthesized initially as an inactive proenzyme, which is activated by self-cleavage at a specific serine bond to produce a beta-subunit with a hydroxyl group at its C-terminus and an alpha-subunit with a pyruvoyl group at its N-terminus.</text>
</comment>
<comment type="similarity">
    <text evidence="1">Belongs to the PanD family.</text>
</comment>
<feature type="chain" id="PRO_1000206184" description="Aspartate 1-decarboxylase beta chain" evidence="1">
    <location>
        <begin position="1"/>
        <end position="24"/>
    </location>
</feature>
<feature type="chain" id="PRO_1000206185" description="Aspartate 1-decarboxylase alpha chain" evidence="1">
    <location>
        <begin position="25"/>
        <end position="115"/>
    </location>
</feature>
<feature type="active site" description="Schiff-base intermediate with substrate; via pyruvic acid" evidence="1">
    <location>
        <position position="25"/>
    </location>
</feature>
<feature type="active site" description="Proton donor" evidence="1">
    <location>
        <position position="58"/>
    </location>
</feature>
<feature type="binding site" evidence="1">
    <location>
        <position position="57"/>
    </location>
    <ligand>
        <name>substrate</name>
    </ligand>
</feature>
<feature type="binding site" evidence="1">
    <location>
        <begin position="73"/>
        <end position="75"/>
    </location>
    <ligand>
        <name>substrate</name>
    </ligand>
</feature>
<feature type="modified residue" description="Pyruvic acid (Ser)" evidence="1">
    <location>
        <position position="25"/>
    </location>
</feature>
<dbReference type="EC" id="4.1.1.11" evidence="1"/>
<dbReference type="EMBL" id="CP001634">
    <property type="protein sequence ID" value="ACR80233.1"/>
    <property type="molecule type" value="Genomic_DNA"/>
</dbReference>
<dbReference type="RefSeq" id="WP_015868878.1">
    <property type="nucleotide sequence ID" value="NC_012785.1"/>
</dbReference>
<dbReference type="SMR" id="C5CEQ3"/>
<dbReference type="STRING" id="521045.Kole_1543"/>
<dbReference type="KEGG" id="kol:Kole_1543"/>
<dbReference type="eggNOG" id="COG0853">
    <property type="taxonomic scope" value="Bacteria"/>
</dbReference>
<dbReference type="HOGENOM" id="CLU_115305_2_0_0"/>
<dbReference type="OrthoDB" id="9803983at2"/>
<dbReference type="UniPathway" id="UPA00028">
    <property type="reaction ID" value="UER00002"/>
</dbReference>
<dbReference type="Proteomes" id="UP000002382">
    <property type="component" value="Chromosome"/>
</dbReference>
<dbReference type="GO" id="GO:0005829">
    <property type="term" value="C:cytosol"/>
    <property type="evidence" value="ECO:0007669"/>
    <property type="project" value="TreeGrafter"/>
</dbReference>
<dbReference type="GO" id="GO:0004068">
    <property type="term" value="F:aspartate 1-decarboxylase activity"/>
    <property type="evidence" value="ECO:0007669"/>
    <property type="project" value="UniProtKB-UniRule"/>
</dbReference>
<dbReference type="GO" id="GO:0006523">
    <property type="term" value="P:alanine biosynthetic process"/>
    <property type="evidence" value="ECO:0007669"/>
    <property type="project" value="InterPro"/>
</dbReference>
<dbReference type="GO" id="GO:0015940">
    <property type="term" value="P:pantothenate biosynthetic process"/>
    <property type="evidence" value="ECO:0007669"/>
    <property type="project" value="UniProtKB-UniRule"/>
</dbReference>
<dbReference type="CDD" id="cd06919">
    <property type="entry name" value="Asp_decarbox"/>
    <property type="match status" value="1"/>
</dbReference>
<dbReference type="Gene3D" id="2.40.40.20">
    <property type="match status" value="1"/>
</dbReference>
<dbReference type="HAMAP" id="MF_00446">
    <property type="entry name" value="PanD"/>
    <property type="match status" value="1"/>
</dbReference>
<dbReference type="InterPro" id="IPR009010">
    <property type="entry name" value="Asp_de-COase-like_dom_sf"/>
</dbReference>
<dbReference type="InterPro" id="IPR003190">
    <property type="entry name" value="Asp_decarbox"/>
</dbReference>
<dbReference type="NCBIfam" id="TIGR00223">
    <property type="entry name" value="panD"/>
    <property type="match status" value="1"/>
</dbReference>
<dbReference type="PANTHER" id="PTHR21012">
    <property type="entry name" value="ASPARTATE 1-DECARBOXYLASE"/>
    <property type="match status" value="1"/>
</dbReference>
<dbReference type="PANTHER" id="PTHR21012:SF0">
    <property type="entry name" value="ASPARTATE 1-DECARBOXYLASE"/>
    <property type="match status" value="1"/>
</dbReference>
<dbReference type="Pfam" id="PF02261">
    <property type="entry name" value="Asp_decarbox"/>
    <property type="match status" value="1"/>
</dbReference>
<dbReference type="PIRSF" id="PIRSF006246">
    <property type="entry name" value="Asp_decarbox"/>
    <property type="match status" value="1"/>
</dbReference>
<dbReference type="SUPFAM" id="SSF50692">
    <property type="entry name" value="ADC-like"/>
    <property type="match status" value="1"/>
</dbReference>
<reference key="1">
    <citation type="submission" date="2009-06" db="EMBL/GenBank/DDBJ databases">
        <title>Complete sequence of Thermotogales bacterium TBF 19.5.1.</title>
        <authorList>
            <consortium name="US DOE Joint Genome Institute"/>
            <person name="Lucas S."/>
            <person name="Copeland A."/>
            <person name="Lapidus A."/>
            <person name="Glavina del Rio T."/>
            <person name="Tice H."/>
            <person name="Bruce D."/>
            <person name="Goodwin L."/>
            <person name="Pitluck S."/>
            <person name="Chertkov O."/>
            <person name="Brettin T."/>
            <person name="Detter J.C."/>
            <person name="Han C."/>
            <person name="Schmutz J."/>
            <person name="Larimer F."/>
            <person name="Land M."/>
            <person name="Hauser L."/>
            <person name="Kyrpides N."/>
            <person name="Ovchinnikova G."/>
            <person name="Noll K."/>
        </authorList>
    </citation>
    <scope>NUCLEOTIDE SEQUENCE [LARGE SCALE GENOMIC DNA]</scope>
    <source>
        <strain>ATCC BAA-1733 / DSM 21960 / TBF 19.5.1</strain>
    </source>
</reference>
<name>PAND_KOSOT</name>
<proteinExistence type="inferred from homology"/>
<accession>C5CEQ3</accession>
<sequence>MFRIMQKSKIHRATVTDKNLNYEGSITIDYRLMKLADIRENELVQVVNINNGERFETYVIKGEEGSGVIALNGAAARLAEIGDRVIIISYAIYNDDEYKPPKIVKVTEKNEPIEK</sequence>
<organism>
    <name type="scientific">Kosmotoga olearia (strain ATCC BAA-1733 / DSM 21960 / TBF 19.5.1)</name>
    <dbReference type="NCBI Taxonomy" id="521045"/>
    <lineage>
        <taxon>Bacteria</taxon>
        <taxon>Thermotogati</taxon>
        <taxon>Thermotogota</taxon>
        <taxon>Thermotogae</taxon>
        <taxon>Kosmotogales</taxon>
        <taxon>Kosmotogaceae</taxon>
        <taxon>Kosmotoga</taxon>
    </lineage>
</organism>
<gene>
    <name evidence="1" type="primary">panD</name>
    <name type="ordered locus">Kole_1543</name>
</gene>
<protein>
    <recommendedName>
        <fullName evidence="1">Aspartate 1-decarboxylase</fullName>
        <ecNumber evidence="1">4.1.1.11</ecNumber>
    </recommendedName>
    <alternativeName>
        <fullName evidence="1">Aspartate alpha-decarboxylase</fullName>
    </alternativeName>
    <component>
        <recommendedName>
            <fullName evidence="1">Aspartate 1-decarboxylase beta chain</fullName>
        </recommendedName>
    </component>
    <component>
        <recommendedName>
            <fullName evidence="1">Aspartate 1-decarboxylase alpha chain</fullName>
        </recommendedName>
    </component>
</protein>
<keyword id="KW-0068">Autocatalytic cleavage</keyword>
<keyword id="KW-0963">Cytoplasm</keyword>
<keyword id="KW-0210">Decarboxylase</keyword>
<keyword id="KW-0456">Lyase</keyword>
<keyword id="KW-0566">Pantothenate biosynthesis</keyword>
<keyword id="KW-0670">Pyruvate</keyword>
<keyword id="KW-1185">Reference proteome</keyword>
<keyword id="KW-0704">Schiff base</keyword>
<keyword id="KW-0865">Zymogen</keyword>
<evidence type="ECO:0000255" key="1">
    <source>
        <dbReference type="HAMAP-Rule" id="MF_00446"/>
    </source>
</evidence>